<protein>
    <recommendedName>
        <fullName evidence="5">Probable acetyltransferase TAP2</fullName>
        <shortName evidence="4">GmTAP2</shortName>
        <ecNumber evidence="2">2.3.1.-</ecNumber>
    </recommendedName>
</protein>
<feature type="chain" id="PRO_0000446673" description="Probable acetyltransferase TAP2">
    <location>
        <begin position="1"/>
        <end position="248"/>
    </location>
</feature>
<feature type="domain" description="N-acetyltransferase" evidence="2">
    <location>
        <begin position="106"/>
        <end position="248"/>
    </location>
</feature>
<organism>
    <name type="scientific">Glycine max</name>
    <name type="common">Soybean</name>
    <name type="synonym">Glycine hispida</name>
    <dbReference type="NCBI Taxonomy" id="3847"/>
    <lineage>
        <taxon>Eukaryota</taxon>
        <taxon>Viridiplantae</taxon>
        <taxon>Streptophyta</taxon>
        <taxon>Embryophyta</taxon>
        <taxon>Tracheophyta</taxon>
        <taxon>Spermatophyta</taxon>
        <taxon>Magnoliopsida</taxon>
        <taxon>eudicotyledons</taxon>
        <taxon>Gunneridae</taxon>
        <taxon>Pentapetalae</taxon>
        <taxon>rosids</taxon>
        <taxon>fabids</taxon>
        <taxon>Fabales</taxon>
        <taxon>Fabaceae</taxon>
        <taxon>Papilionoideae</taxon>
        <taxon>50 kb inversion clade</taxon>
        <taxon>NPAAA clade</taxon>
        <taxon>indigoferoid/millettioid clade</taxon>
        <taxon>Phaseoleae</taxon>
        <taxon>Glycine</taxon>
        <taxon>Glycine subgen. Soja</taxon>
    </lineage>
</organism>
<dbReference type="EC" id="2.3.1.-" evidence="2"/>
<dbReference type="EMBL" id="CM000842">
    <property type="protein sequence ID" value="KRH40658.2"/>
    <property type="molecule type" value="Genomic_DNA"/>
</dbReference>
<dbReference type="SMR" id="A0A0R0IHP4"/>
<dbReference type="FunCoup" id="A0A0R0IHP4">
    <property type="interactions" value="2165"/>
</dbReference>
<dbReference type="STRING" id="3847.A0A0R0IHP4"/>
<dbReference type="PaxDb" id="3847-GLYMA09G40890.1"/>
<dbReference type="EnsemblPlants" id="KRH40658">
    <property type="protein sequence ID" value="KRH40658"/>
    <property type="gene ID" value="GLYMA_09G272400"/>
</dbReference>
<dbReference type="Gramene" id="KRH40658">
    <property type="protein sequence ID" value="KRH40658"/>
    <property type="gene ID" value="GLYMA_09G272400"/>
</dbReference>
<dbReference type="InParanoid" id="A0A0R0IHP4"/>
<dbReference type="OMA" id="QALCDKT"/>
<dbReference type="Proteomes" id="UP000008827">
    <property type="component" value="Chromosome 9"/>
</dbReference>
<dbReference type="ExpressionAtlas" id="A0A0R0IHP4">
    <property type="expression patterns" value="baseline and differential"/>
</dbReference>
<dbReference type="GO" id="GO:0005737">
    <property type="term" value="C:cytoplasm"/>
    <property type="evidence" value="ECO:0000314"/>
    <property type="project" value="UniProtKB"/>
</dbReference>
<dbReference type="GO" id="GO:0005634">
    <property type="term" value="C:nucleus"/>
    <property type="evidence" value="ECO:0000314"/>
    <property type="project" value="UniProtKB"/>
</dbReference>
<dbReference type="GO" id="GO:0008080">
    <property type="term" value="F:N-acetyltransferase activity"/>
    <property type="evidence" value="ECO:0000318"/>
    <property type="project" value="GO_Central"/>
</dbReference>
<dbReference type="CDD" id="cd04301">
    <property type="entry name" value="NAT_SF"/>
    <property type="match status" value="1"/>
</dbReference>
<dbReference type="FunFam" id="3.40.630.30:FF:000059">
    <property type="entry name" value="Putative acetyltransferase NSI"/>
    <property type="match status" value="1"/>
</dbReference>
<dbReference type="Gene3D" id="3.40.630.30">
    <property type="match status" value="1"/>
</dbReference>
<dbReference type="InterPro" id="IPR016181">
    <property type="entry name" value="Acyl_CoA_acyltransferase"/>
</dbReference>
<dbReference type="InterPro" id="IPR000182">
    <property type="entry name" value="GNAT_dom"/>
</dbReference>
<dbReference type="InterPro" id="IPR045039">
    <property type="entry name" value="NSI-like"/>
</dbReference>
<dbReference type="PANTHER" id="PTHR43626">
    <property type="entry name" value="ACYL-COA N-ACYLTRANSFERASE"/>
    <property type="match status" value="1"/>
</dbReference>
<dbReference type="PANTHER" id="PTHR43626:SF4">
    <property type="entry name" value="GCN5-RELATED N-ACETYLTRANSFERASE 2, CHLOROPLASTIC"/>
    <property type="match status" value="1"/>
</dbReference>
<dbReference type="Pfam" id="PF00583">
    <property type="entry name" value="Acetyltransf_1"/>
    <property type="match status" value="1"/>
</dbReference>
<dbReference type="SUPFAM" id="SSF55729">
    <property type="entry name" value="Acyl-CoA N-acyltransferases (Nat)"/>
    <property type="match status" value="1"/>
</dbReference>
<dbReference type="PROSITE" id="PS51186">
    <property type="entry name" value="GNAT"/>
    <property type="match status" value="1"/>
</dbReference>
<sequence>MLTFNLNAISSSFSVVPFHANYPLSTQTQLLVPSNLSYSFATTGTRKFKSFQLKAGFWESIKSGLMKNNSMQVIDPPSADEEDEEPLPQEFVLVEKTEPDGTIEQIIFSSGGDVDVYDLQALCDKGWPRRPLSKLAAALKNSYIVASLHSIRKSPGSEGNEQKRLIGMARATSDHAFNATIWDVLVDPGYQGQGLGKALIEKLIRTLLQRDIGNITLFADSQVVEFYRNLGFEADPEGIKGMFWYPNH</sequence>
<comment type="function">
    <text evidence="1">May acetylate histones H2A and H3.</text>
</comment>
<comment type="subunit">
    <text evidence="3">Does not interact with the effector Avh52 from the pathogen Phytophtora sojae.</text>
</comment>
<comment type="subcellular location">
    <subcellularLocation>
        <location evidence="3">Cytoplasm</location>
    </subcellularLocation>
    <subcellularLocation>
        <location evidence="3">Nucleus</location>
    </subcellularLocation>
</comment>
<comment type="similarity">
    <text evidence="5">Belongs to the acetyltransferase family.</text>
</comment>
<proteinExistence type="evidence at protein level"/>
<accession>A0A0R0IHP4</accession>
<accession>A0A2K7J781</accession>
<evidence type="ECO:0000250" key="1">
    <source>
        <dbReference type="UniProtKB" id="K7MTW9"/>
    </source>
</evidence>
<evidence type="ECO:0000255" key="2">
    <source>
        <dbReference type="PROSITE-ProRule" id="PRU00532"/>
    </source>
</evidence>
<evidence type="ECO:0000269" key="3">
    <source>
    </source>
</evidence>
<evidence type="ECO:0000303" key="4">
    <source>
    </source>
</evidence>
<evidence type="ECO:0000305" key="5"/>
<evidence type="ECO:0000312" key="6">
    <source>
        <dbReference type="EMBL" id="KRH40658.2"/>
    </source>
</evidence>
<name>TAP2_SOYBN</name>
<keyword id="KW-0012">Acyltransferase</keyword>
<keyword id="KW-0963">Cytoplasm</keyword>
<keyword id="KW-0539">Nucleus</keyword>
<keyword id="KW-1185">Reference proteome</keyword>
<keyword id="KW-0808">Transferase</keyword>
<gene>
    <name evidence="4" type="primary">TAP2</name>
    <name evidence="6" type="ORF">GLYMA_09G272400</name>
</gene>
<reference key="1">
    <citation type="journal article" date="2010" name="Nature">
        <title>Genome sequence of the palaeopolyploid soybean.</title>
        <authorList>
            <person name="Schmutz J."/>
            <person name="Cannon S.B."/>
            <person name="Schlueter J."/>
            <person name="Ma J."/>
            <person name="Mitros T."/>
            <person name="Nelson W."/>
            <person name="Hyten D.L."/>
            <person name="Song Q."/>
            <person name="Thelen J.J."/>
            <person name="Cheng J."/>
            <person name="Xu D."/>
            <person name="Hellsten U."/>
            <person name="May G.D."/>
            <person name="Yu Y."/>
            <person name="Sakurai T."/>
            <person name="Umezawa T."/>
            <person name="Bhattacharyya M.K."/>
            <person name="Sandhu D."/>
            <person name="Valliyodan B."/>
            <person name="Lindquist E."/>
            <person name="Peto M."/>
            <person name="Grant D."/>
            <person name="Shu S."/>
            <person name="Goodstein D."/>
            <person name="Barry K."/>
            <person name="Futrell-Griggs M."/>
            <person name="Abernathy B."/>
            <person name="Du J."/>
            <person name="Tian Z."/>
            <person name="Zhu L."/>
            <person name="Gill N."/>
            <person name="Joshi T."/>
            <person name="Libault M."/>
            <person name="Sethuraman A."/>
            <person name="Zhang X.-C."/>
            <person name="Shinozaki K."/>
            <person name="Nguyen H.T."/>
            <person name="Wing R.A."/>
            <person name="Cregan P."/>
            <person name="Specht J."/>
            <person name="Grimwood J."/>
            <person name="Rokhsar D."/>
            <person name="Stacey G."/>
            <person name="Shoemaker R.C."/>
            <person name="Jackson S.A."/>
        </authorList>
    </citation>
    <scope>NUCLEOTIDE SEQUENCE [LARGE SCALE GENOMIC DNA]</scope>
    <source>
        <strain>cv. Williams 82</strain>
    </source>
</reference>
<reference key="2">
    <citation type="journal article" date="2018" name="Elife">
        <title>A Phytophthora effector recruits a host cytoplasmic transacetylase into nuclear speckles to enhance plant susceptibility.</title>
        <authorList>
            <person name="Li H."/>
            <person name="Wang H."/>
            <person name="Jing M."/>
            <person name="Zhu J."/>
            <person name="Guo B."/>
            <person name="Wang Y."/>
            <person name="Lin Y."/>
            <person name="Chen H."/>
            <person name="Kong L."/>
            <person name="Ma Z."/>
            <person name="Wang Y."/>
            <person name="Ye W."/>
            <person name="Dong S."/>
            <person name="Tyler B."/>
            <person name="Wang Y."/>
        </authorList>
    </citation>
    <scope>SUBUNIT</scope>
    <scope>SUBCELLULAR LOCATION</scope>
</reference>